<sequence>MTNKLTFTRPDDWHLHLRDGKAMQSVLPDTARRFARAMIMPNLKLPVVTTEQAAAYRARILSALPQELVGQFEPLMTLYLTDTTTPEEISRAKASGIVQAVKLYPAGATTHSDAGVTDIDRCKATLAMMEKLDMPLLVHGEVVDPAVDIFDREKIFIDRVLIPLLQRFPGLRVVFEHITTREAVEFVQSISNRIAATITAHHLMLNRNALFTGGLQPHHYCLPVLKREIHRQALVAAATSGHSRFFLGTDSAPHPLKDKESACGCAGIYSAHAAIEFYAEIFEQAGRLDRLEAFASFYGPDFYGLPRNTDQISLSKESWQIPGEVEFGGDRLVPLRAGEQVCWRL</sequence>
<gene>
    <name evidence="1" type="primary">pyrC</name>
    <name type="ordered locus">Neut_1659</name>
</gene>
<comment type="function">
    <text evidence="1">Catalyzes the reversible cyclization of carbamoyl aspartate to dihydroorotate.</text>
</comment>
<comment type="catalytic activity">
    <reaction evidence="1">
        <text>(S)-dihydroorotate + H2O = N-carbamoyl-L-aspartate + H(+)</text>
        <dbReference type="Rhea" id="RHEA:24296"/>
        <dbReference type="ChEBI" id="CHEBI:15377"/>
        <dbReference type="ChEBI" id="CHEBI:15378"/>
        <dbReference type="ChEBI" id="CHEBI:30864"/>
        <dbReference type="ChEBI" id="CHEBI:32814"/>
        <dbReference type="EC" id="3.5.2.3"/>
    </reaction>
</comment>
<comment type="cofactor">
    <cofactor evidence="1">
        <name>Zn(2+)</name>
        <dbReference type="ChEBI" id="CHEBI:29105"/>
    </cofactor>
    <text evidence="1">Binds 2 Zn(2+) ions per subunit.</text>
</comment>
<comment type="pathway">
    <text evidence="1">Pyrimidine metabolism; UMP biosynthesis via de novo pathway; (S)-dihydroorotate from bicarbonate: step 3/3.</text>
</comment>
<comment type="subunit">
    <text evidence="1">Homodimer.</text>
</comment>
<comment type="similarity">
    <text evidence="1">Belongs to the metallo-dependent hydrolases superfamily. DHOase family. Class II DHOase subfamily.</text>
</comment>
<accession>Q0AFI1</accession>
<keyword id="KW-0378">Hydrolase</keyword>
<keyword id="KW-0479">Metal-binding</keyword>
<keyword id="KW-0665">Pyrimidine biosynthesis</keyword>
<keyword id="KW-0862">Zinc</keyword>
<name>PYRC_NITEC</name>
<proteinExistence type="inferred from homology"/>
<protein>
    <recommendedName>
        <fullName evidence="1">Dihydroorotase</fullName>
        <shortName evidence="1">DHOase</shortName>
        <ecNumber evidence="1">3.5.2.3</ecNumber>
    </recommendedName>
</protein>
<reference key="1">
    <citation type="journal article" date="2007" name="Environ. Microbiol.">
        <title>Whole-genome analysis of the ammonia-oxidizing bacterium, Nitrosomonas eutropha C91: implications for niche adaptation.</title>
        <authorList>
            <person name="Stein L.Y."/>
            <person name="Arp D.J."/>
            <person name="Berube P.M."/>
            <person name="Chain P.S."/>
            <person name="Hauser L."/>
            <person name="Jetten M.S."/>
            <person name="Klotz M.G."/>
            <person name="Larimer F.W."/>
            <person name="Norton J.M."/>
            <person name="Op den Camp H.J.M."/>
            <person name="Shin M."/>
            <person name="Wei X."/>
        </authorList>
    </citation>
    <scope>NUCLEOTIDE SEQUENCE [LARGE SCALE GENOMIC DNA]</scope>
    <source>
        <strain>DSM 101675 / C91 / Nm57</strain>
    </source>
</reference>
<organism>
    <name type="scientific">Nitrosomonas eutropha (strain DSM 101675 / C91 / Nm57)</name>
    <dbReference type="NCBI Taxonomy" id="335283"/>
    <lineage>
        <taxon>Bacteria</taxon>
        <taxon>Pseudomonadati</taxon>
        <taxon>Pseudomonadota</taxon>
        <taxon>Betaproteobacteria</taxon>
        <taxon>Nitrosomonadales</taxon>
        <taxon>Nitrosomonadaceae</taxon>
        <taxon>Nitrosomonas</taxon>
    </lineage>
</organism>
<dbReference type="EC" id="3.5.2.3" evidence="1"/>
<dbReference type="EMBL" id="CP000450">
    <property type="protein sequence ID" value="ABI59901.1"/>
    <property type="molecule type" value="Genomic_DNA"/>
</dbReference>
<dbReference type="RefSeq" id="WP_011634707.1">
    <property type="nucleotide sequence ID" value="NC_008344.1"/>
</dbReference>
<dbReference type="SMR" id="Q0AFI1"/>
<dbReference type="STRING" id="335283.Neut_1659"/>
<dbReference type="MEROPS" id="M38.A02"/>
<dbReference type="KEGG" id="net:Neut_1659"/>
<dbReference type="eggNOG" id="COG0418">
    <property type="taxonomic scope" value="Bacteria"/>
</dbReference>
<dbReference type="HOGENOM" id="CLU_041558_1_0_4"/>
<dbReference type="OrthoDB" id="9808095at2"/>
<dbReference type="UniPathway" id="UPA00070">
    <property type="reaction ID" value="UER00117"/>
</dbReference>
<dbReference type="Proteomes" id="UP000001966">
    <property type="component" value="Chromosome"/>
</dbReference>
<dbReference type="GO" id="GO:0005829">
    <property type="term" value="C:cytosol"/>
    <property type="evidence" value="ECO:0007669"/>
    <property type="project" value="TreeGrafter"/>
</dbReference>
<dbReference type="GO" id="GO:0004151">
    <property type="term" value="F:dihydroorotase activity"/>
    <property type="evidence" value="ECO:0007669"/>
    <property type="project" value="UniProtKB-UniRule"/>
</dbReference>
<dbReference type="GO" id="GO:0008270">
    <property type="term" value="F:zinc ion binding"/>
    <property type="evidence" value="ECO:0007669"/>
    <property type="project" value="UniProtKB-UniRule"/>
</dbReference>
<dbReference type="GO" id="GO:0006207">
    <property type="term" value="P:'de novo' pyrimidine nucleobase biosynthetic process"/>
    <property type="evidence" value="ECO:0007669"/>
    <property type="project" value="TreeGrafter"/>
</dbReference>
<dbReference type="GO" id="GO:0044205">
    <property type="term" value="P:'de novo' UMP biosynthetic process"/>
    <property type="evidence" value="ECO:0007669"/>
    <property type="project" value="UniProtKB-UniRule"/>
</dbReference>
<dbReference type="CDD" id="cd01294">
    <property type="entry name" value="DHOase"/>
    <property type="match status" value="1"/>
</dbReference>
<dbReference type="FunFam" id="3.20.20.140:FF:000006">
    <property type="entry name" value="Dihydroorotase"/>
    <property type="match status" value="1"/>
</dbReference>
<dbReference type="Gene3D" id="3.20.20.140">
    <property type="entry name" value="Metal-dependent hydrolases"/>
    <property type="match status" value="1"/>
</dbReference>
<dbReference type="HAMAP" id="MF_00219">
    <property type="entry name" value="PyrC_classII"/>
    <property type="match status" value="1"/>
</dbReference>
<dbReference type="InterPro" id="IPR006680">
    <property type="entry name" value="Amidohydro-rel"/>
</dbReference>
<dbReference type="InterPro" id="IPR004721">
    <property type="entry name" value="DHOdimr"/>
</dbReference>
<dbReference type="InterPro" id="IPR002195">
    <property type="entry name" value="Dihydroorotase_CS"/>
</dbReference>
<dbReference type="InterPro" id="IPR032466">
    <property type="entry name" value="Metal_Hydrolase"/>
</dbReference>
<dbReference type="NCBIfam" id="TIGR00856">
    <property type="entry name" value="pyrC_dimer"/>
    <property type="match status" value="1"/>
</dbReference>
<dbReference type="PANTHER" id="PTHR43137">
    <property type="entry name" value="DIHYDROOROTASE"/>
    <property type="match status" value="1"/>
</dbReference>
<dbReference type="PANTHER" id="PTHR43137:SF1">
    <property type="entry name" value="DIHYDROOROTASE"/>
    <property type="match status" value="1"/>
</dbReference>
<dbReference type="Pfam" id="PF01979">
    <property type="entry name" value="Amidohydro_1"/>
    <property type="match status" value="1"/>
</dbReference>
<dbReference type="PIRSF" id="PIRSF001237">
    <property type="entry name" value="DHOdimr"/>
    <property type="match status" value="1"/>
</dbReference>
<dbReference type="SUPFAM" id="SSF51556">
    <property type="entry name" value="Metallo-dependent hydrolases"/>
    <property type="match status" value="1"/>
</dbReference>
<dbReference type="PROSITE" id="PS00482">
    <property type="entry name" value="DIHYDROOROTASE_1"/>
    <property type="match status" value="1"/>
</dbReference>
<dbReference type="PROSITE" id="PS00483">
    <property type="entry name" value="DIHYDROOROTASE_2"/>
    <property type="match status" value="1"/>
</dbReference>
<feature type="chain" id="PRO_1000024025" description="Dihydroorotase">
    <location>
        <begin position="1"/>
        <end position="345"/>
    </location>
</feature>
<feature type="active site" evidence="1">
    <location>
        <position position="250"/>
    </location>
</feature>
<feature type="binding site" evidence="1">
    <location>
        <position position="14"/>
    </location>
    <ligand>
        <name>Zn(2+)</name>
        <dbReference type="ChEBI" id="CHEBI:29105"/>
        <label>1</label>
    </ligand>
</feature>
<feature type="binding site" evidence="1">
    <location>
        <begin position="16"/>
        <end position="18"/>
    </location>
    <ligand>
        <name>substrate</name>
    </ligand>
</feature>
<feature type="binding site" evidence="1">
    <location>
        <position position="16"/>
    </location>
    <ligand>
        <name>Zn(2+)</name>
        <dbReference type="ChEBI" id="CHEBI:29105"/>
        <label>1</label>
    </ligand>
</feature>
<feature type="binding site" evidence="1">
    <location>
        <position position="42"/>
    </location>
    <ligand>
        <name>substrate</name>
    </ligand>
</feature>
<feature type="binding site" description="via carbamate group" evidence="1">
    <location>
        <position position="102"/>
    </location>
    <ligand>
        <name>Zn(2+)</name>
        <dbReference type="ChEBI" id="CHEBI:29105"/>
        <label>1</label>
    </ligand>
</feature>
<feature type="binding site" description="via carbamate group" evidence="1">
    <location>
        <position position="102"/>
    </location>
    <ligand>
        <name>Zn(2+)</name>
        <dbReference type="ChEBI" id="CHEBI:29105"/>
        <label>2</label>
    </ligand>
</feature>
<feature type="binding site" evidence="1">
    <location>
        <position position="139"/>
    </location>
    <ligand>
        <name>substrate</name>
    </ligand>
</feature>
<feature type="binding site" evidence="1">
    <location>
        <position position="139"/>
    </location>
    <ligand>
        <name>Zn(2+)</name>
        <dbReference type="ChEBI" id="CHEBI:29105"/>
        <label>2</label>
    </ligand>
</feature>
<feature type="binding site" evidence="1">
    <location>
        <position position="177"/>
    </location>
    <ligand>
        <name>Zn(2+)</name>
        <dbReference type="ChEBI" id="CHEBI:29105"/>
        <label>2</label>
    </ligand>
</feature>
<feature type="binding site" evidence="1">
    <location>
        <position position="222"/>
    </location>
    <ligand>
        <name>substrate</name>
    </ligand>
</feature>
<feature type="binding site" evidence="1">
    <location>
        <position position="250"/>
    </location>
    <ligand>
        <name>Zn(2+)</name>
        <dbReference type="ChEBI" id="CHEBI:29105"/>
        <label>1</label>
    </ligand>
</feature>
<feature type="binding site" evidence="1">
    <location>
        <position position="254"/>
    </location>
    <ligand>
        <name>substrate</name>
    </ligand>
</feature>
<feature type="binding site" evidence="1">
    <location>
        <position position="266"/>
    </location>
    <ligand>
        <name>substrate</name>
    </ligand>
</feature>
<feature type="modified residue" description="N6-carboxylysine" evidence="1">
    <location>
        <position position="102"/>
    </location>
</feature>
<evidence type="ECO:0000255" key="1">
    <source>
        <dbReference type="HAMAP-Rule" id="MF_00219"/>
    </source>
</evidence>